<protein>
    <recommendedName>
        <fullName evidence="1">1-(5-phosphoribosyl)-5-[(5-phosphoribosylamino)methylideneamino] imidazole-4-carboxamide isomerase</fullName>
        <ecNumber evidence="1">5.3.1.16</ecNumber>
    </recommendedName>
    <alternativeName>
        <fullName evidence="1">Phosphoribosylformimino-5-aminoimidazole carboxamide ribotide isomerase</fullName>
    </alternativeName>
</protein>
<accession>B1XSV2</accession>
<name>HIS4_POLNS</name>
<gene>
    <name evidence="1" type="primary">hisA</name>
    <name type="ordered locus">Pnec_0110</name>
</gene>
<feature type="chain" id="PRO_1000135137" description="1-(5-phosphoribosyl)-5-[(5-phosphoribosylamino)methylideneamino] imidazole-4-carboxamide isomerase">
    <location>
        <begin position="1"/>
        <end position="253"/>
    </location>
</feature>
<feature type="active site" description="Proton acceptor" evidence="1">
    <location>
        <position position="8"/>
    </location>
</feature>
<feature type="active site" description="Proton donor" evidence="1">
    <location>
        <position position="131"/>
    </location>
</feature>
<evidence type="ECO:0000255" key="1">
    <source>
        <dbReference type="HAMAP-Rule" id="MF_01014"/>
    </source>
</evidence>
<reference key="1">
    <citation type="journal article" date="2013" name="Proc. Natl. Acad. Sci. U.S.A.">
        <title>Polynucleobacter necessarius, a model for genome reduction in both free-living and symbiotic bacteria.</title>
        <authorList>
            <person name="Boscaro V."/>
            <person name="Felletti M."/>
            <person name="Vannini C."/>
            <person name="Ackerman M.S."/>
            <person name="Chain P.S."/>
            <person name="Malfatti S."/>
            <person name="Vergez L.M."/>
            <person name="Shin M."/>
            <person name="Doak T.G."/>
            <person name="Lynch M."/>
            <person name="Petroni G."/>
        </authorList>
    </citation>
    <scope>NUCLEOTIDE SEQUENCE [LARGE SCALE GENOMIC DNA]</scope>
    <source>
        <strain>STIR1</strain>
    </source>
</reference>
<proteinExistence type="inferred from homology"/>
<comment type="catalytic activity">
    <reaction evidence="1">
        <text>1-(5-phospho-beta-D-ribosyl)-5-[(5-phospho-beta-D-ribosylamino)methylideneamino]imidazole-4-carboxamide = 5-[(5-phospho-1-deoxy-D-ribulos-1-ylimino)methylamino]-1-(5-phospho-beta-D-ribosyl)imidazole-4-carboxamide</text>
        <dbReference type="Rhea" id="RHEA:15469"/>
        <dbReference type="ChEBI" id="CHEBI:58435"/>
        <dbReference type="ChEBI" id="CHEBI:58525"/>
        <dbReference type="EC" id="5.3.1.16"/>
    </reaction>
</comment>
<comment type="pathway">
    <text evidence="1">Amino-acid biosynthesis; L-histidine biosynthesis; L-histidine from 5-phospho-alpha-D-ribose 1-diphosphate: step 4/9.</text>
</comment>
<comment type="subcellular location">
    <subcellularLocation>
        <location evidence="1">Cytoplasm</location>
    </subcellularLocation>
</comment>
<comment type="similarity">
    <text evidence="1">Belongs to the HisA/HisF family.</text>
</comment>
<organism>
    <name type="scientific">Polynucleobacter necessarius subsp. necessarius (strain STIR1)</name>
    <dbReference type="NCBI Taxonomy" id="452638"/>
    <lineage>
        <taxon>Bacteria</taxon>
        <taxon>Pseudomonadati</taxon>
        <taxon>Pseudomonadota</taxon>
        <taxon>Betaproteobacteria</taxon>
        <taxon>Burkholderiales</taxon>
        <taxon>Burkholderiaceae</taxon>
        <taxon>Polynucleobacter</taxon>
    </lineage>
</organism>
<dbReference type="EC" id="5.3.1.16" evidence="1"/>
<dbReference type="EMBL" id="CP001010">
    <property type="protein sequence ID" value="ACB43429.1"/>
    <property type="molecule type" value="Genomic_DNA"/>
</dbReference>
<dbReference type="SMR" id="B1XSV2"/>
<dbReference type="STRING" id="452638.Pnec_0110"/>
<dbReference type="KEGG" id="pne:Pnec_0110"/>
<dbReference type="eggNOG" id="COG0106">
    <property type="taxonomic scope" value="Bacteria"/>
</dbReference>
<dbReference type="HOGENOM" id="CLU_048577_1_1_4"/>
<dbReference type="OrthoDB" id="9807749at2"/>
<dbReference type="UniPathway" id="UPA00031">
    <property type="reaction ID" value="UER00009"/>
</dbReference>
<dbReference type="GO" id="GO:0005737">
    <property type="term" value="C:cytoplasm"/>
    <property type="evidence" value="ECO:0007669"/>
    <property type="project" value="UniProtKB-SubCell"/>
</dbReference>
<dbReference type="GO" id="GO:0003949">
    <property type="term" value="F:1-(5-phosphoribosyl)-5-[(5-phosphoribosylamino)methylideneamino]imidazole-4-carboxamide isomerase activity"/>
    <property type="evidence" value="ECO:0007669"/>
    <property type="project" value="UniProtKB-UniRule"/>
</dbReference>
<dbReference type="GO" id="GO:0000105">
    <property type="term" value="P:L-histidine biosynthetic process"/>
    <property type="evidence" value="ECO:0007669"/>
    <property type="project" value="UniProtKB-UniRule"/>
</dbReference>
<dbReference type="GO" id="GO:0000162">
    <property type="term" value="P:L-tryptophan biosynthetic process"/>
    <property type="evidence" value="ECO:0007669"/>
    <property type="project" value="TreeGrafter"/>
</dbReference>
<dbReference type="CDD" id="cd04732">
    <property type="entry name" value="HisA"/>
    <property type="match status" value="1"/>
</dbReference>
<dbReference type="FunFam" id="3.20.20.70:FF:000009">
    <property type="entry name" value="1-(5-phosphoribosyl)-5-[(5-phosphoribosylamino)methylideneamino] imidazole-4-carboxamide isomerase"/>
    <property type="match status" value="1"/>
</dbReference>
<dbReference type="Gene3D" id="3.20.20.70">
    <property type="entry name" value="Aldolase class I"/>
    <property type="match status" value="1"/>
</dbReference>
<dbReference type="HAMAP" id="MF_01014">
    <property type="entry name" value="HisA"/>
    <property type="match status" value="1"/>
</dbReference>
<dbReference type="InterPro" id="IPR013785">
    <property type="entry name" value="Aldolase_TIM"/>
</dbReference>
<dbReference type="InterPro" id="IPR006062">
    <property type="entry name" value="His_biosynth"/>
</dbReference>
<dbReference type="InterPro" id="IPR006063">
    <property type="entry name" value="HisA_bact_arch"/>
</dbReference>
<dbReference type="InterPro" id="IPR044524">
    <property type="entry name" value="Isoase_HisA-like"/>
</dbReference>
<dbReference type="InterPro" id="IPR023016">
    <property type="entry name" value="Isoase_HisA-like_bact"/>
</dbReference>
<dbReference type="InterPro" id="IPR011060">
    <property type="entry name" value="RibuloseP-bd_barrel"/>
</dbReference>
<dbReference type="NCBIfam" id="TIGR00007">
    <property type="entry name" value="1-(5-phosphoribosyl)-5-[(5-phosphoribosylamino)methylideneamino]imidazole-4-carboxamide isomerase"/>
    <property type="match status" value="1"/>
</dbReference>
<dbReference type="NCBIfam" id="NF010112">
    <property type="entry name" value="PRK13585.1"/>
    <property type="match status" value="1"/>
</dbReference>
<dbReference type="PANTHER" id="PTHR43090">
    <property type="entry name" value="1-(5-PHOSPHORIBOSYL)-5-[(5-PHOSPHORIBOSYLAMINO)METHYLIDENEAMINO] IMIDAZOLE-4-CARBOXAMIDE ISOMERASE"/>
    <property type="match status" value="1"/>
</dbReference>
<dbReference type="PANTHER" id="PTHR43090:SF2">
    <property type="entry name" value="1-(5-PHOSPHORIBOSYL)-5-[(5-PHOSPHORIBOSYLAMINO)METHYLIDENEAMINO] IMIDAZOLE-4-CARBOXAMIDE ISOMERASE"/>
    <property type="match status" value="1"/>
</dbReference>
<dbReference type="Pfam" id="PF00977">
    <property type="entry name" value="His_biosynth"/>
    <property type="match status" value="1"/>
</dbReference>
<dbReference type="SUPFAM" id="SSF51366">
    <property type="entry name" value="Ribulose-phoshate binding barrel"/>
    <property type="match status" value="1"/>
</dbReference>
<sequence>MLLIPAIDLKDGHCVRLEQGDMDKATVFSEDPGAMAAHWISKGARCLHLVDLNGAFAGKLKNESAIKSILKAVGDEIPVQLGGGIRDLETIERLLDDGISTVIIGTAAVKNPGFVQDACTAFPGHVMVGLDARDGKVATDGWSKITCHKVIDLAKKFEDWGVEAIIYTDIGRDGMLKGVNIDATVKLAQAIRIPVIASGGLSNNQDIDALCKAEEEGVMGVIAGRSIYASDLDLAAAQKYADELTLKYKKKTN</sequence>
<keyword id="KW-0028">Amino-acid biosynthesis</keyword>
<keyword id="KW-0963">Cytoplasm</keyword>
<keyword id="KW-0368">Histidine biosynthesis</keyword>
<keyword id="KW-0413">Isomerase</keyword>